<protein>
    <recommendedName>
        <fullName evidence="4">ATP synthase F(1) complex subunit alpha, mitochondrial</fullName>
    </recommendedName>
    <alternativeName>
        <fullName evidence="4">ATP synthase F1 subunit alpha</fullName>
    </alternativeName>
</protein>
<name>ATPA_PANTR</name>
<reference key="1">
    <citation type="journal article" date="2007" name="Gene">
        <title>Mapping of chimpanzee full-length cDNAs onto the human genome unveils large potential divergence of the transcriptome.</title>
        <authorList>
            <person name="Sakate R."/>
            <person name="Suto Y."/>
            <person name="Imanishi T."/>
            <person name="Tanoue T."/>
            <person name="Hida M."/>
            <person name="Hayasaka I."/>
            <person name="Kusuda J."/>
            <person name="Gojobori T."/>
            <person name="Hashimoto K."/>
            <person name="Hirai M."/>
        </authorList>
    </citation>
    <scope>NUCLEOTIDE SEQUENCE [MRNA]</scope>
    <source>
        <tissue>Cerebellum</tissue>
    </source>
</reference>
<comment type="function">
    <text evidence="3 4">Subunit alpha, of the mitochondrial membrane ATP synthase complex (F(1)F(0) ATP synthase or Complex V) that produces ATP from ADP in the presence of a proton gradient across the membrane which is generated by electron transport complexes of the respiratory chain. ATP synthase complex consist of a soluble F(1) head domain - the catalytic core - and a membrane F(1) domain - the membrane proton channel. These two domains are linked by a central stalk rotating inside the F(1) region and a stationary peripheral stalk. During catalysis, ATP synthesis in the catalytic domain of F(1) is coupled via a rotary mechanism of the central stalk subunits to proton translocation (By similarity). In vivo, can only synthesize ATP although its ATP hydrolase activity can be activated artificially in vitro (By similarity). With the catalytic subunit beta (ATP5F1B), forms the catalytic core in the F(1) domain. Subunit alpha does not bear the catalytic high-affinity ATP-binding sites (By similarity).</text>
</comment>
<comment type="subunit">
    <text evidence="2 4 5">Homotrimer. Component of the ATP synthase complex composed at least of ATP5F1A/subunit alpha, ATP5F1B/subunit beta, ATP5MC1/subunit c (homooctomer), MT-ATP6/subunit a, MT-ATP8/subunit 8, ATP5ME/subunit e, ATP5MF/subunit f, ATP5MG/subunit g, ATP5MK/subunit k, ATP5MJ/subunit j, ATP5F1C/subunit gamma, ATP5F1D/subunit delta, ATP5F1E/subunit epsilon, ATP5PF/subunit F6, ATP5PB/subunit b, ATP5PD/subunit d, ATP5PO/subunit OSCP. ATP synthase complex consists of a soluble F(1) head domain (subunits alpha(3) and beta(3)) - the catalytic core - and a membrane F(0) domain - the membrane proton channel (subunits c, a, 8, e, f, g, k and j). These two domains are linked by a central stalk (subunits gamma, delta, and epsilon) rotating inside the F1 region and a stationary peripheral stalk (subunits F6, b, d, and OSCP). Interacts with ATPAF2. Interacts with HRG; the interaction occurs on the surface of T-cells and alters the cell morphology when associated with concanavalin (in vitro). Interacts with PLG (angiostatin peptide); the interaction inhibits most of the angiogenic properties of angiostatin. Interacts with BLOC1S1 (By similarity). Interacts with BCL2L1 isoform BCL-X(L); the interaction mediates the association of BCL2L1 isoform BCL-X(L) with the mitochondrial membrane F(1)F(0) ATP synthase and enhances neurons metabolic efficiency (By similarity). Interacts with CLN5 and PPT1. Interacts with S100A1; this interaction increases F1-ATPase activity (By similarity). Interacts with ABCB7; this interaction allows the regulation of cellular iron homeostasis and cellular reactive oxygen species (ROS) levels in cardiomyocytes (By similarity).</text>
</comment>
<comment type="subcellular location">
    <subcellularLocation>
        <location evidence="3">Mitochondrion inner membrane</location>
        <topology evidence="3">Peripheral membrane protein</topology>
        <orientation evidence="3">Matrix side</orientation>
    </subcellularLocation>
    <subcellularLocation>
        <location evidence="4">Cell membrane</location>
        <topology evidence="4">Peripheral membrane protein</topology>
        <orientation evidence="4">Extracellular side</orientation>
    </subcellularLocation>
    <text evidence="4">Colocalizes with HRG on the cell surface of T-cells.</text>
</comment>
<comment type="PTM">
    <text evidence="4">Acetylated on lysine residues. BLOC1S1 is required for acetylation.</text>
</comment>
<comment type="miscellaneous">
    <text evidence="4">The siderophore enterobactin (Ent) produced by enteric bacteria binds Fe(3+) and helps bacteria scavenge iron ions from the environment. As a consequence, the mammalian siderocalin LCN2 plays an important role in defense against bacterial infections by sequestering iron bound to microbial siderophores. LCN2 can also bind iron bound to endogenous or nutrient-derived iron chelators and plays an important role in cellular iron homeostasis. Enterobactin produced by non-pathogenic E.coli strains can facilitate mitochondrial iron assimilation, suggesting that iron bound to siderophores from non-pathogenic bacteria may contribute to iron absorption by the host.</text>
</comment>
<comment type="similarity">
    <text evidence="6">Belongs to the ATPase alpha/beta chains family.</text>
</comment>
<sequence>MLSVRVAAAVVRALPRRAGLVSRNALGSSFIAARNFHASNTHLQKTGTAEMSSILEERILGADTSVDLEETGRVLSIGDGIARVHGLRNVQAEEMVEFSSGLKGMSLNLEPDNVGVVVFGNDKLIKEGDIVKRTGAIVDVPVGEELLGRVVDALGNAIDGKGPIGSKTRRRVGLKAPGIIPRISVREPMQTGIKAVDSLVPIGRGQRELIIGDRQTGKTSIAIDTIINQKRFNDGSDEKKKLYCIYVAIGQKRSTVAQLVKRLTDADAMKYTIVVSATASDAAPLQYLAPYSGCSMGEYFRDNGKHALIIYDDLSKQAVAYRQMSLLLRRPPGREAYPGDVFYLHSRLLERAAKMNDAFGGGSLTALPVIETQAGDVSAYIPTNVISITDGQIFLETELFYKGIRPAINVGLSVSRVGSAAQTRAMKQVAGTMKLELAQYREVAAFAQFGSDLDAATQQLLSRGVRLTELLKQGQYSPMAIEEQVAVIYAGVRGYLDKLEPSKITKFENAFLSHVVSQHQALLGTIRADGKISEQSDAKLKEIVTNFLAGFEA</sequence>
<gene>
    <name evidence="4" type="primary">ATP5F1A</name>
    <name type="synonym">ATP5A1</name>
</gene>
<evidence type="ECO:0000250" key="1"/>
<evidence type="ECO:0000250" key="2">
    <source>
        <dbReference type="UniProtKB" id="P15999"/>
    </source>
</evidence>
<evidence type="ECO:0000250" key="3">
    <source>
        <dbReference type="UniProtKB" id="P19483"/>
    </source>
</evidence>
<evidence type="ECO:0000250" key="4">
    <source>
        <dbReference type="UniProtKB" id="P25705"/>
    </source>
</evidence>
<evidence type="ECO:0000250" key="5">
    <source>
        <dbReference type="UniProtKB" id="Q03265"/>
    </source>
</evidence>
<evidence type="ECO:0000305" key="6"/>
<accession>A5A6H5</accession>
<keyword id="KW-0007">Acetylation</keyword>
<keyword id="KW-0066">ATP synthesis</keyword>
<keyword id="KW-0067">ATP-binding</keyword>
<keyword id="KW-1003">Cell membrane</keyword>
<keyword id="KW-0139">CF(1)</keyword>
<keyword id="KW-0325">Glycoprotein</keyword>
<keyword id="KW-0375">Hydrogen ion transport</keyword>
<keyword id="KW-0406">Ion transport</keyword>
<keyword id="KW-0460">Magnesium</keyword>
<keyword id="KW-0472">Membrane</keyword>
<keyword id="KW-0479">Metal-binding</keyword>
<keyword id="KW-0488">Methylation</keyword>
<keyword id="KW-0496">Mitochondrion</keyword>
<keyword id="KW-0999">Mitochondrion inner membrane</keyword>
<keyword id="KW-0547">Nucleotide-binding</keyword>
<keyword id="KW-0597">Phosphoprotein</keyword>
<keyword id="KW-1185">Reference proteome</keyword>
<keyword id="KW-0809">Transit peptide</keyword>
<keyword id="KW-0813">Transport</keyword>
<feature type="transit peptide" description="Mitochondrion" evidence="3">
    <location>
        <begin position="1"/>
        <end position="43"/>
    </location>
</feature>
<feature type="chain" id="PRO_0000296642" description="ATP synthase F(1) complex subunit alpha, mitochondrial">
    <location>
        <begin position="44"/>
        <end position="553"/>
    </location>
</feature>
<feature type="binding site" evidence="4">
    <location>
        <position position="215"/>
    </location>
    <ligand>
        <name>ATP</name>
        <dbReference type="ChEBI" id="CHEBI:30616"/>
        <note>ligand shared between homotrimeric partners</note>
    </ligand>
</feature>
<feature type="binding site" evidence="4">
    <location>
        <position position="217"/>
    </location>
    <ligand>
        <name>ATP</name>
        <dbReference type="ChEBI" id="CHEBI:30616"/>
        <note>ligand shared between homotrimeric partners</note>
    </ligand>
</feature>
<feature type="binding site" evidence="4">
    <location>
        <position position="218"/>
    </location>
    <ligand>
        <name>ATP</name>
        <dbReference type="ChEBI" id="CHEBI:30616"/>
        <note>ligand shared between homotrimeric partners</note>
    </ligand>
</feature>
<feature type="binding site" evidence="4">
    <location>
        <position position="219"/>
    </location>
    <ligand>
        <name>ATP</name>
        <dbReference type="ChEBI" id="CHEBI:30616"/>
        <note>ligand shared between homotrimeric partners</note>
    </ligand>
</feature>
<feature type="binding site" evidence="4">
    <location>
        <position position="219"/>
    </location>
    <ligand>
        <name>Mg(2+)</name>
        <dbReference type="ChEBI" id="CHEBI:18420"/>
        <note>ligand shared between homotrimeric partners</note>
    </ligand>
</feature>
<feature type="binding site" evidence="4">
    <location>
        <position position="220"/>
    </location>
    <ligand>
        <name>ATP</name>
        <dbReference type="ChEBI" id="CHEBI:30616"/>
        <note>ligand shared between homotrimeric partners</note>
    </ligand>
</feature>
<feature type="binding site" evidence="4">
    <location>
        <position position="312"/>
    </location>
    <ligand>
        <name>Mg(2+)</name>
        <dbReference type="ChEBI" id="CHEBI:18420"/>
        <note>ligand shared between homotrimeric partners</note>
    </ligand>
</feature>
<feature type="binding site" evidence="4">
    <location>
        <position position="473"/>
    </location>
    <ligand>
        <name>ATP</name>
        <dbReference type="ChEBI" id="CHEBI:30616"/>
        <note>ligand shared between homotrimeric partners</note>
    </ligand>
</feature>
<feature type="binding site" evidence="4">
    <location>
        <position position="475"/>
    </location>
    <ligand>
        <name>ATP</name>
        <dbReference type="ChEBI" id="CHEBI:30616"/>
        <note>ligand shared between homotrimeric partners</note>
    </ligand>
</feature>
<feature type="site" description="Required for activity" evidence="1">
    <location>
        <position position="413"/>
    </location>
</feature>
<feature type="modified residue" description="Phosphoserine" evidence="4">
    <location>
        <position position="53"/>
    </location>
</feature>
<feature type="modified residue" description="Phosphoserine" evidence="4">
    <location>
        <position position="65"/>
    </location>
</feature>
<feature type="modified residue" description="Phosphoserine; alternate" evidence="4">
    <location>
        <position position="76"/>
    </location>
</feature>
<feature type="modified residue" description="Phosphoserine" evidence="5">
    <location>
        <position position="106"/>
    </location>
</feature>
<feature type="modified residue" description="N6-acetyllysine" evidence="5">
    <location>
        <position position="123"/>
    </location>
</feature>
<feature type="modified residue" description="N6-acetyllysine" evidence="5">
    <location>
        <position position="126"/>
    </location>
</feature>
<feature type="modified residue" description="N6-acetyllysine" evidence="5">
    <location>
        <position position="132"/>
    </location>
</feature>
<feature type="modified residue" description="Phosphothreonine" evidence="2">
    <location>
        <position position="134"/>
    </location>
</feature>
<feature type="modified residue" description="N6-acetyllysine; alternate" evidence="4">
    <location>
        <position position="161"/>
    </location>
</feature>
<feature type="modified residue" description="N6-succinyllysine; alternate" evidence="5">
    <location>
        <position position="161"/>
    </location>
</feature>
<feature type="modified residue" description="Phosphoserine" evidence="4">
    <location>
        <position position="166"/>
    </location>
</feature>
<feature type="modified residue" description="N6-acetyllysine; alternate" evidence="5">
    <location>
        <position position="167"/>
    </location>
</feature>
<feature type="modified residue" description="N6-succinyllysine; alternate" evidence="5">
    <location>
        <position position="167"/>
    </location>
</feature>
<feature type="modified residue" description="Phosphoserine" evidence="4">
    <location>
        <position position="184"/>
    </location>
</feature>
<feature type="modified residue" description="Omega-N-methylarginine" evidence="5">
    <location>
        <position position="204"/>
    </location>
</feature>
<feature type="modified residue" description="N6-acetyllysine; alternate" evidence="5">
    <location>
        <position position="230"/>
    </location>
</feature>
<feature type="modified residue" description="N6-succinyllysine; alternate" evidence="5">
    <location>
        <position position="230"/>
    </location>
</feature>
<feature type="modified residue" description="N6-acetyllysine; alternate" evidence="5">
    <location>
        <position position="239"/>
    </location>
</feature>
<feature type="modified residue" description="N6-succinyllysine; alternate" evidence="5">
    <location>
        <position position="239"/>
    </location>
</feature>
<feature type="modified residue" description="N6-acetyllysine" evidence="5">
    <location>
        <position position="240"/>
    </location>
</feature>
<feature type="modified residue" description="N6-acetyllysine; alternate" evidence="4">
    <location>
        <position position="261"/>
    </location>
</feature>
<feature type="modified residue" description="N6-succinyllysine; alternate" evidence="5">
    <location>
        <position position="261"/>
    </location>
</feature>
<feature type="modified residue" description="N6-acetyllysine; alternate" evidence="5">
    <location>
        <position position="305"/>
    </location>
</feature>
<feature type="modified residue" description="N6-succinyllysine; alternate" evidence="5">
    <location>
        <position position="305"/>
    </location>
</feature>
<feature type="modified residue" description="N6-acetyllysine; alternate" evidence="5">
    <location>
        <position position="427"/>
    </location>
</feature>
<feature type="modified residue" description="N6-succinyllysine; alternate" evidence="5">
    <location>
        <position position="427"/>
    </location>
</feature>
<feature type="modified residue" description="N6-acetyllysine" evidence="4">
    <location>
        <position position="434"/>
    </location>
</feature>
<feature type="modified residue" description="N6-acetyllysine; alternate" evidence="4">
    <location>
        <position position="498"/>
    </location>
</feature>
<feature type="modified residue" description="N6-succinyllysine; alternate" evidence="5">
    <location>
        <position position="498"/>
    </location>
</feature>
<feature type="modified residue" description="N6-acetyllysine; alternate" evidence="4">
    <location>
        <position position="506"/>
    </location>
</feature>
<feature type="modified residue" description="N6-succinyllysine; alternate" evidence="5">
    <location>
        <position position="506"/>
    </location>
</feature>
<feature type="modified residue" description="N6-acetyllysine; alternate" evidence="5">
    <location>
        <position position="531"/>
    </location>
</feature>
<feature type="modified residue" description="N6-succinyllysine; alternate" evidence="5">
    <location>
        <position position="531"/>
    </location>
</feature>
<feature type="modified residue" description="N6-acetyllysine; alternate" evidence="4">
    <location>
        <position position="539"/>
    </location>
</feature>
<feature type="modified residue" description="N6-succinyllysine; alternate" evidence="5">
    <location>
        <position position="539"/>
    </location>
</feature>
<feature type="modified residue" description="N6-acetyllysine" evidence="5">
    <location>
        <position position="541"/>
    </location>
</feature>
<feature type="glycosylation site" description="O-linked (GlcNAc) serine; alternate" evidence="1">
    <location>
        <position position="76"/>
    </location>
</feature>
<dbReference type="EMBL" id="AB222103">
    <property type="protein sequence ID" value="BAF62348.1"/>
    <property type="molecule type" value="mRNA"/>
</dbReference>
<dbReference type="RefSeq" id="NP_001129208.1">
    <property type="nucleotide sequence ID" value="NM_001135736.1"/>
</dbReference>
<dbReference type="SMR" id="A5A6H5"/>
<dbReference type="FunCoup" id="A5A6H5">
    <property type="interactions" value="1814"/>
</dbReference>
<dbReference type="STRING" id="9598.ENSPTRP00000064836"/>
<dbReference type="GlyCosmos" id="A5A6H5">
    <property type="glycosylation" value="1 site, No reported glycans"/>
</dbReference>
<dbReference type="PaxDb" id="9598-ENSPTRP00000016989"/>
<dbReference type="Ensembl" id="ENSPTRT00000018343.4">
    <property type="protein sequence ID" value="ENSPTRP00000016989.3"/>
    <property type="gene ID" value="ENSPTRG00000009991.4"/>
</dbReference>
<dbReference type="GeneID" id="455397"/>
<dbReference type="KEGG" id="ptr:455397"/>
<dbReference type="CTD" id="498"/>
<dbReference type="VGNC" id="VGNC:49013">
    <property type="gene designation" value="ATP5F1A"/>
</dbReference>
<dbReference type="eggNOG" id="KOG1353">
    <property type="taxonomic scope" value="Eukaryota"/>
</dbReference>
<dbReference type="GeneTree" id="ENSGT00550000074846"/>
<dbReference type="HOGENOM" id="CLU_010091_2_1_1"/>
<dbReference type="InParanoid" id="A5A6H5"/>
<dbReference type="OrthoDB" id="5749at9604"/>
<dbReference type="TreeFam" id="TF300321"/>
<dbReference type="Proteomes" id="UP000002277">
    <property type="component" value="Chromosome 18"/>
</dbReference>
<dbReference type="Bgee" id="ENSPTRG00000009991">
    <property type="expression patterns" value="Expressed in heart and 20 other cell types or tissues"/>
</dbReference>
<dbReference type="GO" id="GO:0005743">
    <property type="term" value="C:mitochondrial inner membrane"/>
    <property type="evidence" value="ECO:0007669"/>
    <property type="project" value="UniProtKB-SubCell"/>
</dbReference>
<dbReference type="GO" id="GO:0005886">
    <property type="term" value="C:plasma membrane"/>
    <property type="evidence" value="ECO:0007669"/>
    <property type="project" value="UniProtKB-SubCell"/>
</dbReference>
<dbReference type="GO" id="GO:0045259">
    <property type="term" value="C:proton-transporting ATP synthase complex"/>
    <property type="evidence" value="ECO:0000250"/>
    <property type="project" value="UniProtKB"/>
</dbReference>
<dbReference type="GO" id="GO:0043531">
    <property type="term" value="F:ADP binding"/>
    <property type="evidence" value="ECO:0000318"/>
    <property type="project" value="GO_Central"/>
</dbReference>
<dbReference type="GO" id="GO:0005524">
    <property type="term" value="F:ATP binding"/>
    <property type="evidence" value="ECO:0000318"/>
    <property type="project" value="GO_Central"/>
</dbReference>
<dbReference type="GO" id="GO:0046933">
    <property type="term" value="F:proton-transporting ATP synthase activity, rotational mechanism"/>
    <property type="evidence" value="ECO:0007669"/>
    <property type="project" value="InterPro"/>
</dbReference>
<dbReference type="GO" id="GO:0015986">
    <property type="term" value="P:proton motive force-driven ATP synthesis"/>
    <property type="evidence" value="ECO:0000250"/>
    <property type="project" value="UniProtKB"/>
</dbReference>
<dbReference type="CDD" id="cd18113">
    <property type="entry name" value="ATP-synt_F1_alpha_C"/>
    <property type="match status" value="1"/>
</dbReference>
<dbReference type="CDD" id="cd18116">
    <property type="entry name" value="ATP-synt_F1_alpha_N"/>
    <property type="match status" value="1"/>
</dbReference>
<dbReference type="CDD" id="cd01132">
    <property type="entry name" value="F1-ATPase_alpha_CD"/>
    <property type="match status" value="1"/>
</dbReference>
<dbReference type="FunFam" id="1.20.150.20:FF:000001">
    <property type="entry name" value="ATP synthase subunit alpha"/>
    <property type="match status" value="1"/>
</dbReference>
<dbReference type="FunFam" id="2.40.30.20:FF:000001">
    <property type="entry name" value="ATP synthase subunit alpha"/>
    <property type="match status" value="1"/>
</dbReference>
<dbReference type="FunFam" id="3.40.50.300:FF:002432">
    <property type="entry name" value="ATP synthase subunit alpha, mitochondrial"/>
    <property type="match status" value="1"/>
</dbReference>
<dbReference type="Gene3D" id="2.40.30.20">
    <property type="match status" value="1"/>
</dbReference>
<dbReference type="Gene3D" id="1.20.150.20">
    <property type="entry name" value="ATP synthase alpha/beta chain, C-terminal domain"/>
    <property type="match status" value="1"/>
</dbReference>
<dbReference type="Gene3D" id="3.40.50.300">
    <property type="entry name" value="P-loop containing nucleotide triphosphate hydrolases"/>
    <property type="match status" value="1"/>
</dbReference>
<dbReference type="HAMAP" id="MF_01346">
    <property type="entry name" value="ATP_synth_alpha_bact"/>
    <property type="match status" value="1"/>
</dbReference>
<dbReference type="InterPro" id="IPR023366">
    <property type="entry name" value="ATP_synth_asu-like_sf"/>
</dbReference>
<dbReference type="InterPro" id="IPR000793">
    <property type="entry name" value="ATP_synth_asu_C"/>
</dbReference>
<dbReference type="InterPro" id="IPR038376">
    <property type="entry name" value="ATP_synth_asu_C_sf"/>
</dbReference>
<dbReference type="InterPro" id="IPR033732">
    <property type="entry name" value="ATP_synth_F1_a_nt-bd_dom"/>
</dbReference>
<dbReference type="InterPro" id="IPR005294">
    <property type="entry name" value="ATP_synth_F1_asu"/>
</dbReference>
<dbReference type="InterPro" id="IPR020003">
    <property type="entry name" value="ATPase_a/bsu_AS"/>
</dbReference>
<dbReference type="InterPro" id="IPR004100">
    <property type="entry name" value="ATPase_F1/V1/A1_a/bsu_N"/>
</dbReference>
<dbReference type="InterPro" id="IPR036121">
    <property type="entry name" value="ATPase_F1/V1/A1_a/bsu_N_sf"/>
</dbReference>
<dbReference type="InterPro" id="IPR000194">
    <property type="entry name" value="ATPase_F1/V1/A1_a/bsu_nucl-bd"/>
</dbReference>
<dbReference type="InterPro" id="IPR027417">
    <property type="entry name" value="P-loop_NTPase"/>
</dbReference>
<dbReference type="NCBIfam" id="TIGR00962">
    <property type="entry name" value="atpA"/>
    <property type="match status" value="1"/>
</dbReference>
<dbReference type="NCBIfam" id="NF009884">
    <property type="entry name" value="PRK13343.1"/>
    <property type="match status" value="1"/>
</dbReference>
<dbReference type="PANTHER" id="PTHR48082">
    <property type="entry name" value="ATP SYNTHASE SUBUNIT ALPHA, MITOCHONDRIAL"/>
    <property type="match status" value="1"/>
</dbReference>
<dbReference type="PANTHER" id="PTHR48082:SF2">
    <property type="entry name" value="ATP SYNTHASE SUBUNIT ALPHA, MITOCHONDRIAL"/>
    <property type="match status" value="1"/>
</dbReference>
<dbReference type="Pfam" id="PF00006">
    <property type="entry name" value="ATP-synt_ab"/>
    <property type="match status" value="1"/>
</dbReference>
<dbReference type="Pfam" id="PF00306">
    <property type="entry name" value="ATP-synt_ab_C"/>
    <property type="match status" value="1"/>
</dbReference>
<dbReference type="Pfam" id="PF02874">
    <property type="entry name" value="ATP-synt_ab_N"/>
    <property type="match status" value="1"/>
</dbReference>
<dbReference type="PIRSF" id="PIRSF039088">
    <property type="entry name" value="F_ATPase_subunit_alpha"/>
    <property type="match status" value="1"/>
</dbReference>
<dbReference type="SUPFAM" id="SSF47917">
    <property type="entry name" value="C-terminal domain of alpha and beta subunits of F1 ATP synthase"/>
    <property type="match status" value="1"/>
</dbReference>
<dbReference type="SUPFAM" id="SSF50615">
    <property type="entry name" value="N-terminal domain of alpha and beta subunits of F1 ATP synthase"/>
    <property type="match status" value="1"/>
</dbReference>
<dbReference type="SUPFAM" id="SSF52540">
    <property type="entry name" value="P-loop containing nucleoside triphosphate hydrolases"/>
    <property type="match status" value="1"/>
</dbReference>
<dbReference type="PROSITE" id="PS00152">
    <property type="entry name" value="ATPASE_ALPHA_BETA"/>
    <property type="match status" value="1"/>
</dbReference>
<proteinExistence type="evidence at transcript level"/>
<organism>
    <name type="scientific">Pan troglodytes</name>
    <name type="common">Chimpanzee</name>
    <dbReference type="NCBI Taxonomy" id="9598"/>
    <lineage>
        <taxon>Eukaryota</taxon>
        <taxon>Metazoa</taxon>
        <taxon>Chordata</taxon>
        <taxon>Craniata</taxon>
        <taxon>Vertebrata</taxon>
        <taxon>Euteleostomi</taxon>
        <taxon>Mammalia</taxon>
        <taxon>Eutheria</taxon>
        <taxon>Euarchontoglires</taxon>
        <taxon>Primates</taxon>
        <taxon>Haplorrhini</taxon>
        <taxon>Catarrhini</taxon>
        <taxon>Hominidae</taxon>
        <taxon>Pan</taxon>
    </lineage>
</organism>